<evidence type="ECO:0000255" key="1">
    <source>
        <dbReference type="HAMAP-Rule" id="MF_00133"/>
    </source>
</evidence>
<feature type="chain" id="PRO_1000018323" description="Tryptophan synthase beta chain">
    <location>
        <begin position="1"/>
        <end position="397"/>
    </location>
</feature>
<feature type="modified residue" description="N6-(pyridoxal phosphate)lysine" evidence="1">
    <location>
        <position position="91"/>
    </location>
</feature>
<organism>
    <name type="scientific">Bacillus cereus (strain ZK / E33L)</name>
    <dbReference type="NCBI Taxonomy" id="288681"/>
    <lineage>
        <taxon>Bacteria</taxon>
        <taxon>Bacillati</taxon>
        <taxon>Bacillota</taxon>
        <taxon>Bacilli</taxon>
        <taxon>Bacillales</taxon>
        <taxon>Bacillaceae</taxon>
        <taxon>Bacillus</taxon>
        <taxon>Bacillus cereus group</taxon>
    </lineage>
</organism>
<protein>
    <recommendedName>
        <fullName evidence="1">Tryptophan synthase beta chain</fullName>
        <ecNumber evidence="1">4.2.1.20</ecNumber>
    </recommendedName>
</protein>
<comment type="function">
    <text evidence="1">The beta subunit is responsible for the synthesis of L-tryptophan from indole and L-serine.</text>
</comment>
<comment type="catalytic activity">
    <reaction evidence="1">
        <text>(1S,2R)-1-C-(indol-3-yl)glycerol 3-phosphate + L-serine = D-glyceraldehyde 3-phosphate + L-tryptophan + H2O</text>
        <dbReference type="Rhea" id="RHEA:10532"/>
        <dbReference type="ChEBI" id="CHEBI:15377"/>
        <dbReference type="ChEBI" id="CHEBI:33384"/>
        <dbReference type="ChEBI" id="CHEBI:57912"/>
        <dbReference type="ChEBI" id="CHEBI:58866"/>
        <dbReference type="ChEBI" id="CHEBI:59776"/>
        <dbReference type="EC" id="4.2.1.20"/>
    </reaction>
</comment>
<comment type="cofactor">
    <cofactor evidence="1">
        <name>pyridoxal 5'-phosphate</name>
        <dbReference type="ChEBI" id="CHEBI:597326"/>
    </cofactor>
</comment>
<comment type="pathway">
    <text evidence="1">Amino-acid biosynthesis; L-tryptophan biosynthesis; L-tryptophan from chorismate: step 5/5.</text>
</comment>
<comment type="subunit">
    <text evidence="1">Tetramer of two alpha and two beta chains.</text>
</comment>
<comment type="similarity">
    <text evidence="1">Belongs to the TrpB family.</text>
</comment>
<name>TRPB_BACCZ</name>
<keyword id="KW-0028">Amino-acid biosynthesis</keyword>
<keyword id="KW-0057">Aromatic amino acid biosynthesis</keyword>
<keyword id="KW-0456">Lyase</keyword>
<keyword id="KW-0663">Pyridoxal phosphate</keyword>
<keyword id="KW-0822">Tryptophan biosynthesis</keyword>
<proteinExistence type="inferred from homology"/>
<dbReference type="EC" id="4.2.1.20" evidence="1"/>
<dbReference type="EMBL" id="CP000001">
    <property type="protein sequence ID" value="AAU19112.1"/>
    <property type="molecule type" value="Genomic_DNA"/>
</dbReference>
<dbReference type="RefSeq" id="WP_001104998.1">
    <property type="nucleotide sequence ID" value="NC_006274.1"/>
</dbReference>
<dbReference type="SMR" id="Q63EC7"/>
<dbReference type="KEGG" id="bcz:BCE33L1135"/>
<dbReference type="PATRIC" id="fig|288681.22.peg.4429"/>
<dbReference type="UniPathway" id="UPA00035">
    <property type="reaction ID" value="UER00044"/>
</dbReference>
<dbReference type="Proteomes" id="UP000002612">
    <property type="component" value="Chromosome"/>
</dbReference>
<dbReference type="GO" id="GO:0005737">
    <property type="term" value="C:cytoplasm"/>
    <property type="evidence" value="ECO:0007669"/>
    <property type="project" value="TreeGrafter"/>
</dbReference>
<dbReference type="GO" id="GO:0004834">
    <property type="term" value="F:tryptophan synthase activity"/>
    <property type="evidence" value="ECO:0007669"/>
    <property type="project" value="UniProtKB-UniRule"/>
</dbReference>
<dbReference type="CDD" id="cd06446">
    <property type="entry name" value="Trp-synth_B"/>
    <property type="match status" value="1"/>
</dbReference>
<dbReference type="FunFam" id="3.40.50.1100:FF:000001">
    <property type="entry name" value="Tryptophan synthase beta chain"/>
    <property type="match status" value="1"/>
</dbReference>
<dbReference type="FunFam" id="3.40.50.1100:FF:000004">
    <property type="entry name" value="Tryptophan synthase beta chain"/>
    <property type="match status" value="1"/>
</dbReference>
<dbReference type="Gene3D" id="3.40.50.1100">
    <property type="match status" value="2"/>
</dbReference>
<dbReference type="HAMAP" id="MF_00133">
    <property type="entry name" value="Trp_synth_beta"/>
    <property type="match status" value="1"/>
</dbReference>
<dbReference type="InterPro" id="IPR006653">
    <property type="entry name" value="Trp_synth_b_CS"/>
</dbReference>
<dbReference type="InterPro" id="IPR006654">
    <property type="entry name" value="Trp_synth_beta"/>
</dbReference>
<dbReference type="InterPro" id="IPR023026">
    <property type="entry name" value="Trp_synth_beta/beta-like"/>
</dbReference>
<dbReference type="InterPro" id="IPR001926">
    <property type="entry name" value="TrpB-like_PALP"/>
</dbReference>
<dbReference type="InterPro" id="IPR036052">
    <property type="entry name" value="TrpB-like_PALP_sf"/>
</dbReference>
<dbReference type="NCBIfam" id="TIGR00263">
    <property type="entry name" value="trpB"/>
    <property type="match status" value="1"/>
</dbReference>
<dbReference type="PANTHER" id="PTHR48077:SF3">
    <property type="entry name" value="TRYPTOPHAN SYNTHASE"/>
    <property type="match status" value="1"/>
</dbReference>
<dbReference type="PANTHER" id="PTHR48077">
    <property type="entry name" value="TRYPTOPHAN SYNTHASE-RELATED"/>
    <property type="match status" value="1"/>
</dbReference>
<dbReference type="Pfam" id="PF00291">
    <property type="entry name" value="PALP"/>
    <property type="match status" value="1"/>
</dbReference>
<dbReference type="PIRSF" id="PIRSF001413">
    <property type="entry name" value="Trp_syn_beta"/>
    <property type="match status" value="1"/>
</dbReference>
<dbReference type="SUPFAM" id="SSF53686">
    <property type="entry name" value="Tryptophan synthase beta subunit-like PLP-dependent enzymes"/>
    <property type="match status" value="1"/>
</dbReference>
<dbReference type="PROSITE" id="PS00168">
    <property type="entry name" value="TRP_SYNTHASE_BETA"/>
    <property type="match status" value="1"/>
</dbReference>
<accession>Q63EC7</accession>
<sequence length="397" mass="43604">MNYAYPDEKGHYGIYGGRYVPETLMQSVLELEEAYKEAMEDEAFQKELNHYLKTYVGRETPLYFAENMTEYCGGAKIYLKREDLNHTGAHKINNTIGQALLAVRMGKKKVVAETGAGQHGVATATVCALLGLECVIFMGEEDVRRQKLNVFRMELLGAKVESVAAGSGTLKDAVNEALRYWVSHVHDTHYIMGSVLGPHPFPQIVRDFQSVIGKETKKQYEALEGKLPEAVVACIGGGSNAMGMFYPFVHDEEVALYGVEAAGKGVHTEKHAATLTKGSVGVLHGSMMYLLQNEEGQIQEAHSISAGLDYPGVGPEHSLLKDIGRVSYHSITDDEALEAFQLLTKKEGIIPALESSHAVAYALKLAPKMKEDEGLVICLSGRGDKDVESIKRYMEEV</sequence>
<gene>
    <name evidence="1" type="primary">trpB</name>
    <name type="ordered locus">BCE33L1135</name>
</gene>
<reference key="1">
    <citation type="journal article" date="2006" name="J. Bacteriol.">
        <title>Pathogenomic sequence analysis of Bacillus cereus and Bacillus thuringiensis isolates closely related to Bacillus anthracis.</title>
        <authorList>
            <person name="Han C.S."/>
            <person name="Xie G."/>
            <person name="Challacombe J.F."/>
            <person name="Altherr M.R."/>
            <person name="Bhotika S.S."/>
            <person name="Bruce D."/>
            <person name="Campbell C.S."/>
            <person name="Campbell M.L."/>
            <person name="Chen J."/>
            <person name="Chertkov O."/>
            <person name="Cleland C."/>
            <person name="Dimitrijevic M."/>
            <person name="Doggett N.A."/>
            <person name="Fawcett J.J."/>
            <person name="Glavina T."/>
            <person name="Goodwin L.A."/>
            <person name="Hill K.K."/>
            <person name="Hitchcock P."/>
            <person name="Jackson P.J."/>
            <person name="Keim P."/>
            <person name="Kewalramani A.R."/>
            <person name="Longmire J."/>
            <person name="Lucas S."/>
            <person name="Malfatti S."/>
            <person name="McMurry K."/>
            <person name="Meincke L.J."/>
            <person name="Misra M."/>
            <person name="Moseman B.L."/>
            <person name="Mundt M."/>
            <person name="Munk A.C."/>
            <person name="Okinaka R.T."/>
            <person name="Parson-Quintana B."/>
            <person name="Reilly L.P."/>
            <person name="Richardson P."/>
            <person name="Robinson D.L."/>
            <person name="Rubin E."/>
            <person name="Saunders E."/>
            <person name="Tapia R."/>
            <person name="Tesmer J.G."/>
            <person name="Thayer N."/>
            <person name="Thompson L.S."/>
            <person name="Tice H."/>
            <person name="Ticknor L.O."/>
            <person name="Wills P.L."/>
            <person name="Brettin T.S."/>
            <person name="Gilna P."/>
        </authorList>
    </citation>
    <scope>NUCLEOTIDE SEQUENCE [LARGE SCALE GENOMIC DNA]</scope>
    <source>
        <strain>ZK / E33L</strain>
    </source>
</reference>